<protein>
    <recommendedName>
        <fullName evidence="1">Sulfate adenylyltransferase</fullName>
        <ecNumber evidence="1">2.7.7.4</ecNumber>
    </recommendedName>
    <alternativeName>
        <fullName evidence="1">ATP-sulfurylase</fullName>
    </alternativeName>
    <alternativeName>
        <fullName evidence="1">Sulfate adenylate transferase</fullName>
        <shortName evidence="1">SAT</shortName>
    </alternativeName>
</protein>
<proteinExistence type="inferred from homology"/>
<evidence type="ECO:0000255" key="1">
    <source>
        <dbReference type="HAMAP-Rule" id="MF_00066"/>
    </source>
</evidence>
<reference key="1">
    <citation type="journal article" date="2003" name="DNA Res.">
        <title>Complete genome structure of Gloeobacter violaceus PCC 7421, a cyanobacterium that lacks thylakoids.</title>
        <authorList>
            <person name="Nakamura Y."/>
            <person name="Kaneko T."/>
            <person name="Sato S."/>
            <person name="Mimuro M."/>
            <person name="Miyashita H."/>
            <person name="Tsuchiya T."/>
            <person name="Sasamoto S."/>
            <person name="Watanabe A."/>
            <person name="Kawashima K."/>
            <person name="Kishida Y."/>
            <person name="Kiyokawa C."/>
            <person name="Kohara M."/>
            <person name="Matsumoto M."/>
            <person name="Matsuno A."/>
            <person name="Nakazaki N."/>
            <person name="Shimpo S."/>
            <person name="Takeuchi C."/>
            <person name="Yamada M."/>
            <person name="Tabata S."/>
        </authorList>
    </citation>
    <scope>NUCLEOTIDE SEQUENCE [LARGE SCALE GENOMIC DNA]</scope>
    <source>
        <strain>ATCC 29082 / PCC 7421</strain>
    </source>
</reference>
<dbReference type="EC" id="2.7.7.4" evidence="1"/>
<dbReference type="EMBL" id="BA000045">
    <property type="protein sequence ID" value="BAC89025.1"/>
    <property type="molecule type" value="Genomic_DNA"/>
</dbReference>
<dbReference type="RefSeq" id="NP_924030.1">
    <property type="nucleotide sequence ID" value="NC_005125.1"/>
</dbReference>
<dbReference type="RefSeq" id="WP_011141086.1">
    <property type="nucleotide sequence ID" value="NC_005125.1"/>
</dbReference>
<dbReference type="SMR" id="Q7NLN7"/>
<dbReference type="STRING" id="251221.gene:10758563"/>
<dbReference type="EnsemblBacteria" id="BAC89025">
    <property type="protein sequence ID" value="BAC89025"/>
    <property type="gene ID" value="BAC89025"/>
</dbReference>
<dbReference type="KEGG" id="gvi:glr1084"/>
<dbReference type="PATRIC" id="fig|251221.4.peg.1111"/>
<dbReference type="eggNOG" id="COG2046">
    <property type="taxonomic scope" value="Bacteria"/>
</dbReference>
<dbReference type="HOGENOM" id="CLU_022950_1_1_3"/>
<dbReference type="InParanoid" id="Q7NLN7"/>
<dbReference type="OrthoDB" id="9804504at2"/>
<dbReference type="PhylomeDB" id="Q7NLN7"/>
<dbReference type="UniPathway" id="UPA00140">
    <property type="reaction ID" value="UER00204"/>
</dbReference>
<dbReference type="Proteomes" id="UP000000557">
    <property type="component" value="Chromosome"/>
</dbReference>
<dbReference type="GO" id="GO:0005524">
    <property type="term" value="F:ATP binding"/>
    <property type="evidence" value="ECO:0007669"/>
    <property type="project" value="UniProtKB-KW"/>
</dbReference>
<dbReference type="GO" id="GO:0004781">
    <property type="term" value="F:sulfate adenylyltransferase (ATP) activity"/>
    <property type="evidence" value="ECO:0007669"/>
    <property type="project" value="UniProtKB-UniRule"/>
</dbReference>
<dbReference type="GO" id="GO:0070814">
    <property type="term" value="P:hydrogen sulfide biosynthetic process"/>
    <property type="evidence" value="ECO:0007669"/>
    <property type="project" value="UniProtKB-UniRule"/>
</dbReference>
<dbReference type="GO" id="GO:0000103">
    <property type="term" value="P:sulfate assimilation"/>
    <property type="evidence" value="ECO:0007669"/>
    <property type="project" value="UniProtKB-UniRule"/>
</dbReference>
<dbReference type="CDD" id="cd00517">
    <property type="entry name" value="ATPS"/>
    <property type="match status" value="1"/>
</dbReference>
<dbReference type="Gene3D" id="3.40.50.620">
    <property type="entry name" value="HUPs"/>
    <property type="match status" value="1"/>
</dbReference>
<dbReference type="Gene3D" id="3.10.400.10">
    <property type="entry name" value="Sulfate adenylyltransferase"/>
    <property type="match status" value="1"/>
</dbReference>
<dbReference type="HAMAP" id="MF_00066">
    <property type="entry name" value="Sulf_adenylyltr"/>
    <property type="match status" value="1"/>
</dbReference>
<dbReference type="InterPro" id="IPR025980">
    <property type="entry name" value="ATP-Sase_PUA-like_dom"/>
</dbReference>
<dbReference type="InterPro" id="IPR015947">
    <property type="entry name" value="PUA-like_sf"/>
</dbReference>
<dbReference type="InterPro" id="IPR014729">
    <property type="entry name" value="Rossmann-like_a/b/a_fold"/>
</dbReference>
<dbReference type="InterPro" id="IPR020792">
    <property type="entry name" value="SO4_adenylyltransferase_pro"/>
</dbReference>
<dbReference type="InterPro" id="IPR024951">
    <property type="entry name" value="Sulfurylase_cat_dom"/>
</dbReference>
<dbReference type="InterPro" id="IPR002650">
    <property type="entry name" value="Sulphate_adenylyltransferase"/>
</dbReference>
<dbReference type="NCBIfam" id="NF003166">
    <property type="entry name" value="PRK04149.1"/>
    <property type="match status" value="1"/>
</dbReference>
<dbReference type="NCBIfam" id="TIGR00339">
    <property type="entry name" value="sopT"/>
    <property type="match status" value="1"/>
</dbReference>
<dbReference type="PANTHER" id="PTHR43509">
    <property type="match status" value="1"/>
</dbReference>
<dbReference type="PANTHER" id="PTHR43509:SF1">
    <property type="entry name" value="SULFATE ADENYLYLTRANSFERASE"/>
    <property type="match status" value="1"/>
</dbReference>
<dbReference type="Pfam" id="PF01747">
    <property type="entry name" value="ATP-sulfurylase"/>
    <property type="match status" value="1"/>
</dbReference>
<dbReference type="Pfam" id="PF14306">
    <property type="entry name" value="PUA_2"/>
    <property type="match status" value="1"/>
</dbReference>
<dbReference type="SUPFAM" id="SSF52374">
    <property type="entry name" value="Nucleotidylyl transferase"/>
    <property type="match status" value="1"/>
</dbReference>
<dbReference type="SUPFAM" id="SSF88697">
    <property type="entry name" value="PUA domain-like"/>
    <property type="match status" value="1"/>
</dbReference>
<keyword id="KW-0067">ATP-binding</keyword>
<keyword id="KW-0547">Nucleotide-binding</keyword>
<keyword id="KW-0548">Nucleotidyltransferase</keyword>
<keyword id="KW-1185">Reference proteome</keyword>
<keyword id="KW-0808">Transferase</keyword>
<sequence>MSSAPKQTIAPHGGTLINQVATAEQRQKYQDGAGGFKRVRIDDRAVSDLELIAIGGFSPLTGFMGSEDYHSVVEKMRLTSGVVWSIPITLPVSAEVAETLEIGESLGLEDSTGTLVGILDLAEKYTYDKLREAEMVYRTTDEKHPGVKVVYGQGDVYLAGPIMLLERRPHPLFASRQLDPADSRQAFIDKGWRSVVGFQTRNPIHRAHEYIQKCALEIVDGLFLHPLVGATKSDDIPADVRMHCYEVLIEKYYPLDRVILAINPAAMRYAGPREAIFHALVRKNYGCTHFIVGRDHAGVGDYYGTYDAQYIFYEFEPQDLGITPLMFEHAFYCKRIAGMATTKTSPSGPEDRIHLSGTKVRAMLREGLEPPPEFTRPEVARILIEAIQKQGQ</sequence>
<name>SAT_GLOVI</name>
<organism>
    <name type="scientific">Gloeobacter violaceus (strain ATCC 29082 / PCC 7421)</name>
    <dbReference type="NCBI Taxonomy" id="251221"/>
    <lineage>
        <taxon>Bacteria</taxon>
        <taxon>Bacillati</taxon>
        <taxon>Cyanobacteriota</taxon>
        <taxon>Cyanophyceae</taxon>
        <taxon>Gloeobacterales</taxon>
        <taxon>Gloeobacteraceae</taxon>
        <taxon>Gloeobacter</taxon>
    </lineage>
</organism>
<accession>Q7NLN7</accession>
<gene>
    <name evidence="1" type="primary">sat</name>
    <name type="ordered locus">glr1084</name>
</gene>
<feature type="chain" id="PRO_0000340623" description="Sulfate adenylyltransferase">
    <location>
        <begin position="1"/>
        <end position="392"/>
    </location>
</feature>
<comment type="catalytic activity">
    <reaction evidence="1">
        <text>sulfate + ATP + H(+) = adenosine 5'-phosphosulfate + diphosphate</text>
        <dbReference type="Rhea" id="RHEA:18133"/>
        <dbReference type="ChEBI" id="CHEBI:15378"/>
        <dbReference type="ChEBI" id="CHEBI:16189"/>
        <dbReference type="ChEBI" id="CHEBI:30616"/>
        <dbReference type="ChEBI" id="CHEBI:33019"/>
        <dbReference type="ChEBI" id="CHEBI:58243"/>
        <dbReference type="EC" id="2.7.7.4"/>
    </reaction>
</comment>
<comment type="pathway">
    <text evidence="1">Sulfur metabolism; hydrogen sulfide biosynthesis; sulfite from sulfate: step 1/3.</text>
</comment>
<comment type="similarity">
    <text evidence="1">Belongs to the sulfate adenylyltransferase family.</text>
</comment>